<comment type="function">
    <text evidence="1">One of the primary rRNA binding proteins, it binds directly to 16S rRNA central domain where it helps coordinate assembly of the platform of the 30S subunit.</text>
</comment>
<comment type="subunit">
    <text evidence="1">Part of the 30S ribosomal subunit. Contacts proteins S5 and S12.</text>
</comment>
<comment type="similarity">
    <text evidence="1">Belongs to the universal ribosomal protein uS8 family.</text>
</comment>
<evidence type="ECO:0000255" key="1">
    <source>
        <dbReference type="HAMAP-Rule" id="MF_01302"/>
    </source>
</evidence>
<evidence type="ECO:0000305" key="2"/>
<name>RS8_GEODF</name>
<gene>
    <name evidence="1" type="primary">rpsH</name>
    <name type="ordered locus">Geob_3611</name>
</gene>
<reference key="1">
    <citation type="submission" date="2009-01" db="EMBL/GenBank/DDBJ databases">
        <title>Complete sequence of Geobacter sp. FRC-32.</title>
        <authorList>
            <consortium name="US DOE Joint Genome Institute"/>
            <person name="Lucas S."/>
            <person name="Copeland A."/>
            <person name="Lapidus A."/>
            <person name="Glavina del Rio T."/>
            <person name="Dalin E."/>
            <person name="Tice H."/>
            <person name="Bruce D."/>
            <person name="Goodwin L."/>
            <person name="Pitluck S."/>
            <person name="Saunders E."/>
            <person name="Brettin T."/>
            <person name="Detter J.C."/>
            <person name="Han C."/>
            <person name="Larimer F."/>
            <person name="Land M."/>
            <person name="Hauser L."/>
            <person name="Kyrpides N."/>
            <person name="Ovchinnikova G."/>
            <person name="Kostka J."/>
            <person name="Richardson P."/>
        </authorList>
    </citation>
    <scope>NUCLEOTIDE SEQUENCE [LARGE SCALE GENOMIC DNA]</scope>
    <source>
        <strain>DSM 22248 / JCM 15807 / FRC-32</strain>
    </source>
</reference>
<keyword id="KW-1185">Reference proteome</keyword>
<keyword id="KW-0687">Ribonucleoprotein</keyword>
<keyword id="KW-0689">Ribosomal protein</keyword>
<keyword id="KW-0694">RNA-binding</keyword>
<keyword id="KW-0699">rRNA-binding</keyword>
<sequence>MSMTDPIADMLTRIRNAGMAKHQKVDIPSSNLKVSLANLLRNEGFIKNYKVIADNKQGVLRVYLKYIDEKDHVINEIKRVSKPGGRVYVDSDGIPKVKNGLGVAVLSTSKGIITDKSAREFGIGGELICTVW</sequence>
<accession>B9M6G4</accession>
<proteinExistence type="inferred from homology"/>
<protein>
    <recommendedName>
        <fullName evidence="1">Small ribosomal subunit protein uS8</fullName>
    </recommendedName>
    <alternativeName>
        <fullName evidence="2">30S ribosomal protein S8</fullName>
    </alternativeName>
</protein>
<dbReference type="EMBL" id="CP001390">
    <property type="protein sequence ID" value="ACM21952.1"/>
    <property type="molecule type" value="Genomic_DNA"/>
</dbReference>
<dbReference type="RefSeq" id="WP_012648680.1">
    <property type="nucleotide sequence ID" value="NC_011979.1"/>
</dbReference>
<dbReference type="SMR" id="B9M6G4"/>
<dbReference type="STRING" id="316067.Geob_3611"/>
<dbReference type="KEGG" id="geo:Geob_3611"/>
<dbReference type="eggNOG" id="COG0096">
    <property type="taxonomic scope" value="Bacteria"/>
</dbReference>
<dbReference type="HOGENOM" id="CLU_098428_0_2_7"/>
<dbReference type="OrthoDB" id="9802617at2"/>
<dbReference type="Proteomes" id="UP000007721">
    <property type="component" value="Chromosome"/>
</dbReference>
<dbReference type="GO" id="GO:1990904">
    <property type="term" value="C:ribonucleoprotein complex"/>
    <property type="evidence" value="ECO:0007669"/>
    <property type="project" value="UniProtKB-KW"/>
</dbReference>
<dbReference type="GO" id="GO:0005840">
    <property type="term" value="C:ribosome"/>
    <property type="evidence" value="ECO:0007669"/>
    <property type="project" value="UniProtKB-KW"/>
</dbReference>
<dbReference type="GO" id="GO:0019843">
    <property type="term" value="F:rRNA binding"/>
    <property type="evidence" value="ECO:0007669"/>
    <property type="project" value="UniProtKB-UniRule"/>
</dbReference>
<dbReference type="GO" id="GO:0003735">
    <property type="term" value="F:structural constituent of ribosome"/>
    <property type="evidence" value="ECO:0007669"/>
    <property type="project" value="InterPro"/>
</dbReference>
<dbReference type="GO" id="GO:0006412">
    <property type="term" value="P:translation"/>
    <property type="evidence" value="ECO:0007669"/>
    <property type="project" value="UniProtKB-UniRule"/>
</dbReference>
<dbReference type="FunFam" id="3.30.1370.30:FF:000002">
    <property type="entry name" value="30S ribosomal protein S8"/>
    <property type="match status" value="1"/>
</dbReference>
<dbReference type="FunFam" id="3.30.1490.10:FF:000001">
    <property type="entry name" value="30S ribosomal protein S8"/>
    <property type="match status" value="1"/>
</dbReference>
<dbReference type="Gene3D" id="3.30.1370.30">
    <property type="match status" value="1"/>
</dbReference>
<dbReference type="Gene3D" id="3.30.1490.10">
    <property type="match status" value="1"/>
</dbReference>
<dbReference type="HAMAP" id="MF_01302_B">
    <property type="entry name" value="Ribosomal_uS8_B"/>
    <property type="match status" value="1"/>
</dbReference>
<dbReference type="InterPro" id="IPR000630">
    <property type="entry name" value="Ribosomal_uS8"/>
</dbReference>
<dbReference type="InterPro" id="IPR047863">
    <property type="entry name" value="Ribosomal_uS8_CS"/>
</dbReference>
<dbReference type="InterPro" id="IPR035987">
    <property type="entry name" value="Ribosomal_uS8_sf"/>
</dbReference>
<dbReference type="NCBIfam" id="NF001109">
    <property type="entry name" value="PRK00136.1"/>
    <property type="match status" value="1"/>
</dbReference>
<dbReference type="PANTHER" id="PTHR11758">
    <property type="entry name" value="40S RIBOSOMAL PROTEIN S15A"/>
    <property type="match status" value="1"/>
</dbReference>
<dbReference type="Pfam" id="PF00410">
    <property type="entry name" value="Ribosomal_S8"/>
    <property type="match status" value="1"/>
</dbReference>
<dbReference type="SUPFAM" id="SSF56047">
    <property type="entry name" value="Ribosomal protein S8"/>
    <property type="match status" value="1"/>
</dbReference>
<dbReference type="PROSITE" id="PS00053">
    <property type="entry name" value="RIBOSOMAL_S8"/>
    <property type="match status" value="1"/>
</dbReference>
<organism>
    <name type="scientific">Geotalea daltonii (strain DSM 22248 / JCM 15807 / FRC-32)</name>
    <name type="common">Geobacter daltonii</name>
    <dbReference type="NCBI Taxonomy" id="316067"/>
    <lineage>
        <taxon>Bacteria</taxon>
        <taxon>Pseudomonadati</taxon>
        <taxon>Thermodesulfobacteriota</taxon>
        <taxon>Desulfuromonadia</taxon>
        <taxon>Geobacterales</taxon>
        <taxon>Geobacteraceae</taxon>
        <taxon>Geotalea</taxon>
    </lineage>
</organism>
<feature type="chain" id="PRO_1000165333" description="Small ribosomal subunit protein uS8">
    <location>
        <begin position="1"/>
        <end position="132"/>
    </location>
</feature>